<accession>A7Y397</accession>
<keyword id="KW-0150">Chloroplast</keyword>
<keyword id="KW-0507">mRNA processing</keyword>
<keyword id="KW-0934">Plastid</keyword>
<keyword id="KW-0694">RNA-binding</keyword>
<keyword id="KW-0819">tRNA processing</keyword>
<protein>
    <recommendedName>
        <fullName evidence="1">Maturase K</fullName>
    </recommendedName>
    <alternativeName>
        <fullName evidence="1">Intron maturase</fullName>
    </alternativeName>
</protein>
<reference key="1">
    <citation type="journal article" date="2007" name="BMC Plant Biol.">
        <title>Complete plastid genome sequences suggest strong selection for retention of photosynthetic genes in the parasitic plant genus Cuscuta.</title>
        <authorList>
            <person name="McNeal J.R."/>
            <person name="Kuehl J.V."/>
            <person name="Boore J.L."/>
            <person name="dePamphilis C.W."/>
        </authorList>
    </citation>
    <scope>NUCLEOTIDE SEQUENCE [LARGE SCALE GENOMIC DNA]</scope>
</reference>
<sequence length="502" mass="59488">MEEIQGYLQPERSQQHNFLYPLLFQESIYALAHDRGLNRSISFKNTGYEKKLSFQIVKRLITRIYQRIYFTTYSSNKSQIFGPNKSLYSKLLSEGFAFIVEIPFSLRFILERKKILKSQNLRSIHSIFPFLEDNFSHLNYVLDILIPYPPHLEILVQTLHYWVKDASSLHLLRFFLHEYCNFNIFITPKRSRSPFSKINQRFFFFLYNSYVCEYESIFLFLRNQSLHLRSTSFGALFERNIFYGKIECFVKVFAKDFKANLCLLKDADLSMHYFRYRGKSILASKGTLLLMSKWNYYFVNFWQCSFCLWFHTERIYISQLSSHSLDFMGYLSSIPLTPSTVRSQMLENSFLINNAIKKFDTIVPIIPIIGSLAKAKFCNVLGNPISKPVWADLSDSDIIERFGHIYRNFFHYYSGSSKKRSLYRIKYILRLSCARTLARKHKSTVRAFLQSLGSEFLEEFFTSEEQILSFTFPNASSTLRGVYKRRIWYFDIVCINELANYQ</sequence>
<dbReference type="EMBL" id="EU118126">
    <property type="protein sequence ID" value="ABV02329.1"/>
    <property type="molecule type" value="Genomic_DNA"/>
</dbReference>
<dbReference type="RefSeq" id="YP_001468289.1">
    <property type="nucleotide sequence ID" value="NC_009808.1"/>
</dbReference>
<dbReference type="GeneID" id="5601224"/>
<dbReference type="GO" id="GO:0009507">
    <property type="term" value="C:chloroplast"/>
    <property type="evidence" value="ECO:0007669"/>
    <property type="project" value="UniProtKB-SubCell"/>
</dbReference>
<dbReference type="GO" id="GO:0003723">
    <property type="term" value="F:RNA binding"/>
    <property type="evidence" value="ECO:0007669"/>
    <property type="project" value="UniProtKB-KW"/>
</dbReference>
<dbReference type="GO" id="GO:0006397">
    <property type="term" value="P:mRNA processing"/>
    <property type="evidence" value="ECO:0007669"/>
    <property type="project" value="UniProtKB-KW"/>
</dbReference>
<dbReference type="GO" id="GO:0008380">
    <property type="term" value="P:RNA splicing"/>
    <property type="evidence" value="ECO:0007669"/>
    <property type="project" value="UniProtKB-UniRule"/>
</dbReference>
<dbReference type="GO" id="GO:0008033">
    <property type="term" value="P:tRNA processing"/>
    <property type="evidence" value="ECO:0007669"/>
    <property type="project" value="UniProtKB-KW"/>
</dbReference>
<dbReference type="HAMAP" id="MF_01390">
    <property type="entry name" value="MatK"/>
    <property type="match status" value="1"/>
</dbReference>
<dbReference type="InterPro" id="IPR024937">
    <property type="entry name" value="Domain_X"/>
</dbReference>
<dbReference type="InterPro" id="IPR002866">
    <property type="entry name" value="Maturase_MatK"/>
</dbReference>
<dbReference type="InterPro" id="IPR024942">
    <property type="entry name" value="Maturase_MatK_N"/>
</dbReference>
<dbReference type="PANTHER" id="PTHR34811">
    <property type="entry name" value="MATURASE K"/>
    <property type="match status" value="1"/>
</dbReference>
<dbReference type="PANTHER" id="PTHR34811:SF1">
    <property type="entry name" value="MATURASE K"/>
    <property type="match status" value="1"/>
</dbReference>
<dbReference type="Pfam" id="PF01348">
    <property type="entry name" value="Intron_maturas2"/>
    <property type="match status" value="1"/>
</dbReference>
<dbReference type="Pfam" id="PF01824">
    <property type="entry name" value="MatK_N"/>
    <property type="match status" value="1"/>
</dbReference>
<proteinExistence type="inferred from homology"/>
<geneLocation type="chloroplast"/>
<evidence type="ECO:0000255" key="1">
    <source>
        <dbReference type="HAMAP-Rule" id="MF_01390"/>
    </source>
</evidence>
<organism>
    <name type="scientific">Ipomoea purpurea</name>
    <name type="common">Common morning glory</name>
    <name type="synonym">Pharbitis purpurea</name>
    <dbReference type="NCBI Taxonomy" id="4121"/>
    <lineage>
        <taxon>Eukaryota</taxon>
        <taxon>Viridiplantae</taxon>
        <taxon>Streptophyta</taxon>
        <taxon>Embryophyta</taxon>
        <taxon>Tracheophyta</taxon>
        <taxon>Spermatophyta</taxon>
        <taxon>Magnoliopsida</taxon>
        <taxon>eudicotyledons</taxon>
        <taxon>Gunneridae</taxon>
        <taxon>Pentapetalae</taxon>
        <taxon>asterids</taxon>
        <taxon>lamiids</taxon>
        <taxon>Solanales</taxon>
        <taxon>Convolvulaceae</taxon>
        <taxon>Ipomoeeae</taxon>
        <taxon>Ipomoea</taxon>
    </lineage>
</organism>
<name>MATK_IPOPU</name>
<feature type="chain" id="PRO_0000355940" description="Maturase K">
    <location>
        <begin position="1"/>
        <end position="502"/>
    </location>
</feature>
<gene>
    <name evidence="1" type="primary">matK</name>
</gene>
<comment type="function">
    <text evidence="1">Usually encoded in the trnK tRNA gene intron. Probably assists in splicing its own and other chloroplast group II introns.</text>
</comment>
<comment type="subcellular location">
    <subcellularLocation>
        <location>Plastid</location>
        <location>Chloroplast</location>
    </subcellularLocation>
</comment>
<comment type="similarity">
    <text evidence="1">Belongs to the intron maturase 2 family. MatK subfamily.</text>
</comment>